<gene>
    <name type="primary">rluB</name>
    <name type="synonym">ypuL</name>
    <name type="ordered locus">BSU23160</name>
</gene>
<sequence length="244" mass="27738">MERLQKVIAHAGVASRRKAEELIKEGKVKVNGKVVTELGVKVTGSDQIEVNGLKVEREEPVYFLLYKPRGVISAAQDDKGRKVVTDFFKNIPQRIYPIGRLDYDTSGLLLLTNDGEFANKLMHPKYEIDKTYVAKVKGIPPKELLRKLERGIRLEEGKTAPAKAKLLSLDKKKQTSIIQLTIHEGRNRQVRRMFEAIGHEVIKLKREEYAFLNLRGLHTGDARELTPHEVKRLRALADHGKNAF</sequence>
<reference key="1">
    <citation type="journal article" date="1993" name="Mol. Microbiol.">
        <title>The organization of the Bacillus subtilis 168 chromosome region between the spoVA and serA genetic loci, based on sequence data.</title>
        <authorList>
            <person name="Sorokin A.V."/>
            <person name="Zumstein E."/>
            <person name="Azevedo V."/>
            <person name="Ehrlich S.D."/>
            <person name="Serror P."/>
        </authorList>
    </citation>
    <scope>NUCLEOTIDE SEQUENCE [GENOMIC DNA]</scope>
    <source>
        <strain>168 / Marburg / ATCC 6051 / DSM 10 / JCM 1465 / NBRC 13719 / NCIMB 3610 / NRRL NRS-744 / VKM B-501</strain>
    </source>
</reference>
<reference key="2">
    <citation type="journal article" date="1997" name="Nature">
        <title>The complete genome sequence of the Gram-positive bacterium Bacillus subtilis.</title>
        <authorList>
            <person name="Kunst F."/>
            <person name="Ogasawara N."/>
            <person name="Moszer I."/>
            <person name="Albertini A.M."/>
            <person name="Alloni G."/>
            <person name="Azevedo V."/>
            <person name="Bertero M.G."/>
            <person name="Bessieres P."/>
            <person name="Bolotin A."/>
            <person name="Borchert S."/>
            <person name="Borriss R."/>
            <person name="Boursier L."/>
            <person name="Brans A."/>
            <person name="Braun M."/>
            <person name="Brignell S.C."/>
            <person name="Bron S."/>
            <person name="Brouillet S."/>
            <person name="Bruschi C.V."/>
            <person name="Caldwell B."/>
            <person name="Capuano V."/>
            <person name="Carter N.M."/>
            <person name="Choi S.-K."/>
            <person name="Codani J.-J."/>
            <person name="Connerton I.F."/>
            <person name="Cummings N.J."/>
            <person name="Daniel R.A."/>
            <person name="Denizot F."/>
            <person name="Devine K.M."/>
            <person name="Duesterhoeft A."/>
            <person name="Ehrlich S.D."/>
            <person name="Emmerson P.T."/>
            <person name="Entian K.-D."/>
            <person name="Errington J."/>
            <person name="Fabret C."/>
            <person name="Ferrari E."/>
            <person name="Foulger D."/>
            <person name="Fritz C."/>
            <person name="Fujita M."/>
            <person name="Fujita Y."/>
            <person name="Fuma S."/>
            <person name="Galizzi A."/>
            <person name="Galleron N."/>
            <person name="Ghim S.-Y."/>
            <person name="Glaser P."/>
            <person name="Goffeau A."/>
            <person name="Golightly E.J."/>
            <person name="Grandi G."/>
            <person name="Guiseppi G."/>
            <person name="Guy B.J."/>
            <person name="Haga K."/>
            <person name="Haiech J."/>
            <person name="Harwood C.R."/>
            <person name="Henaut A."/>
            <person name="Hilbert H."/>
            <person name="Holsappel S."/>
            <person name="Hosono S."/>
            <person name="Hullo M.-F."/>
            <person name="Itaya M."/>
            <person name="Jones L.-M."/>
            <person name="Joris B."/>
            <person name="Karamata D."/>
            <person name="Kasahara Y."/>
            <person name="Klaerr-Blanchard M."/>
            <person name="Klein C."/>
            <person name="Kobayashi Y."/>
            <person name="Koetter P."/>
            <person name="Koningstein G."/>
            <person name="Krogh S."/>
            <person name="Kumano M."/>
            <person name="Kurita K."/>
            <person name="Lapidus A."/>
            <person name="Lardinois S."/>
            <person name="Lauber J."/>
            <person name="Lazarevic V."/>
            <person name="Lee S.-M."/>
            <person name="Levine A."/>
            <person name="Liu H."/>
            <person name="Masuda S."/>
            <person name="Mauel C."/>
            <person name="Medigue C."/>
            <person name="Medina N."/>
            <person name="Mellado R.P."/>
            <person name="Mizuno M."/>
            <person name="Moestl D."/>
            <person name="Nakai S."/>
            <person name="Noback M."/>
            <person name="Noone D."/>
            <person name="O'Reilly M."/>
            <person name="Ogawa K."/>
            <person name="Ogiwara A."/>
            <person name="Oudega B."/>
            <person name="Park S.-H."/>
            <person name="Parro V."/>
            <person name="Pohl T.M."/>
            <person name="Portetelle D."/>
            <person name="Porwollik S."/>
            <person name="Prescott A.M."/>
            <person name="Presecan E."/>
            <person name="Pujic P."/>
            <person name="Purnelle B."/>
            <person name="Rapoport G."/>
            <person name="Rey M."/>
            <person name="Reynolds S."/>
            <person name="Rieger M."/>
            <person name="Rivolta C."/>
            <person name="Rocha E."/>
            <person name="Roche B."/>
            <person name="Rose M."/>
            <person name="Sadaie Y."/>
            <person name="Sato T."/>
            <person name="Scanlan E."/>
            <person name="Schleich S."/>
            <person name="Schroeter R."/>
            <person name="Scoffone F."/>
            <person name="Sekiguchi J."/>
            <person name="Sekowska A."/>
            <person name="Seror S.J."/>
            <person name="Serror P."/>
            <person name="Shin B.-S."/>
            <person name="Soldo B."/>
            <person name="Sorokin A."/>
            <person name="Tacconi E."/>
            <person name="Takagi T."/>
            <person name="Takahashi H."/>
            <person name="Takemaru K."/>
            <person name="Takeuchi M."/>
            <person name="Tamakoshi A."/>
            <person name="Tanaka T."/>
            <person name="Terpstra P."/>
            <person name="Tognoni A."/>
            <person name="Tosato V."/>
            <person name="Uchiyama S."/>
            <person name="Vandenbol M."/>
            <person name="Vannier F."/>
            <person name="Vassarotti A."/>
            <person name="Viari A."/>
            <person name="Wambutt R."/>
            <person name="Wedler E."/>
            <person name="Wedler H."/>
            <person name="Weitzenegger T."/>
            <person name="Winters P."/>
            <person name="Wipat A."/>
            <person name="Yamamoto H."/>
            <person name="Yamane K."/>
            <person name="Yasumoto K."/>
            <person name="Yata K."/>
            <person name="Yoshida K."/>
            <person name="Yoshikawa H.-F."/>
            <person name="Zumstein E."/>
            <person name="Yoshikawa H."/>
            <person name="Danchin A."/>
        </authorList>
    </citation>
    <scope>NUCLEOTIDE SEQUENCE [LARGE SCALE GENOMIC DNA]</scope>
    <source>
        <strain>168</strain>
    </source>
</reference>
<reference key="3">
    <citation type="journal article" date="2009" name="Microbiology">
        <title>From a consortium sequence to a unified sequence: the Bacillus subtilis 168 reference genome a decade later.</title>
        <authorList>
            <person name="Barbe V."/>
            <person name="Cruveiller S."/>
            <person name="Kunst F."/>
            <person name="Lenoble P."/>
            <person name="Meurice G."/>
            <person name="Sekowska A."/>
            <person name="Vallenet D."/>
            <person name="Wang T."/>
            <person name="Moszer I."/>
            <person name="Medigue C."/>
            <person name="Danchin A."/>
        </authorList>
    </citation>
    <scope>SEQUENCE REVISION TO 17 AND C-TERMINUS</scope>
</reference>
<reference key="4">
    <citation type="journal article" date="1999" name="Biochemistry">
        <title>Cloning and characterization of the 23S RNA pseudouridine 2633 synthase from Bacillus subtilis.</title>
        <authorList>
            <person name="Niu L."/>
            <person name="Lane B.G."/>
            <person name="Ofengand J."/>
        </authorList>
    </citation>
    <scope>CHARACTERIZATION</scope>
</reference>
<reference key="5">
    <citation type="journal article" date="1999" name="Biochemistry">
        <authorList>
            <person name="Niu L."/>
            <person name="Lane B.G."/>
            <person name="Ofengand J."/>
        </authorList>
    </citation>
    <scope>ERRATUM OF PUBMED:9888802</scope>
</reference>
<accession>P35159</accession>
<dbReference type="EC" id="5.4.99.22"/>
<dbReference type="EMBL" id="L09228">
    <property type="protein sequence ID" value="AAA67493.1"/>
    <property type="molecule type" value="Genomic_DNA"/>
</dbReference>
<dbReference type="EMBL" id="AL009126">
    <property type="protein sequence ID" value="CAB14248.2"/>
    <property type="molecule type" value="Genomic_DNA"/>
</dbReference>
<dbReference type="PIR" id="S45555">
    <property type="entry name" value="S45555"/>
</dbReference>
<dbReference type="RefSeq" id="NP_390197.2">
    <property type="nucleotide sequence ID" value="NC_000964.3"/>
</dbReference>
<dbReference type="RefSeq" id="WP_004398815.1">
    <property type="nucleotide sequence ID" value="NZ_OZ025638.1"/>
</dbReference>
<dbReference type="SMR" id="P35159"/>
<dbReference type="FunCoup" id="P35159">
    <property type="interactions" value="483"/>
</dbReference>
<dbReference type="STRING" id="224308.BSU23160"/>
<dbReference type="PaxDb" id="224308-BSU23160"/>
<dbReference type="EnsemblBacteria" id="CAB14248">
    <property type="protein sequence ID" value="CAB14248"/>
    <property type="gene ID" value="BSU_23160"/>
</dbReference>
<dbReference type="GeneID" id="938955"/>
<dbReference type="KEGG" id="bsu:BSU23160"/>
<dbReference type="PATRIC" id="fig|224308.179.peg.2523"/>
<dbReference type="eggNOG" id="COG1187">
    <property type="taxonomic scope" value="Bacteria"/>
</dbReference>
<dbReference type="InParanoid" id="P35159"/>
<dbReference type="OrthoDB" id="9807213at2"/>
<dbReference type="PhylomeDB" id="P35159"/>
<dbReference type="BioCyc" id="BSUB:BSU23160-MONOMER"/>
<dbReference type="Proteomes" id="UP000001570">
    <property type="component" value="Chromosome"/>
</dbReference>
<dbReference type="GO" id="GO:0160139">
    <property type="term" value="F:23S rRNA pseudouridine(2605) synthase activity"/>
    <property type="evidence" value="ECO:0007669"/>
    <property type="project" value="UniProtKB-EC"/>
</dbReference>
<dbReference type="GO" id="GO:0003723">
    <property type="term" value="F:RNA binding"/>
    <property type="evidence" value="ECO:0007669"/>
    <property type="project" value="UniProtKB-KW"/>
</dbReference>
<dbReference type="GO" id="GO:0000455">
    <property type="term" value="P:enzyme-directed rRNA pseudouridine synthesis"/>
    <property type="evidence" value="ECO:0007669"/>
    <property type="project" value="UniProtKB-ARBA"/>
</dbReference>
<dbReference type="CDD" id="cd02870">
    <property type="entry name" value="PseudoU_synth_RsuA_like"/>
    <property type="match status" value="1"/>
</dbReference>
<dbReference type="CDD" id="cd00165">
    <property type="entry name" value="S4"/>
    <property type="match status" value="1"/>
</dbReference>
<dbReference type="FunFam" id="3.10.290.10:FF:000003">
    <property type="entry name" value="Pseudouridine synthase"/>
    <property type="match status" value="1"/>
</dbReference>
<dbReference type="FunFam" id="3.30.70.1560:FF:000001">
    <property type="entry name" value="Pseudouridine synthase"/>
    <property type="match status" value="1"/>
</dbReference>
<dbReference type="FunFam" id="3.30.70.580:FF:000005">
    <property type="entry name" value="Pseudouridine synthase"/>
    <property type="match status" value="1"/>
</dbReference>
<dbReference type="Gene3D" id="3.30.70.1560">
    <property type="entry name" value="Alpha-L RNA-binding motif"/>
    <property type="match status" value="1"/>
</dbReference>
<dbReference type="Gene3D" id="3.30.70.580">
    <property type="entry name" value="Pseudouridine synthase I, catalytic domain, N-terminal subdomain"/>
    <property type="match status" value="1"/>
</dbReference>
<dbReference type="Gene3D" id="3.10.290.10">
    <property type="entry name" value="RNA-binding S4 domain"/>
    <property type="match status" value="1"/>
</dbReference>
<dbReference type="InterPro" id="IPR042092">
    <property type="entry name" value="PsdUridine_s_RsuA/RluB/E/F_cat"/>
</dbReference>
<dbReference type="InterPro" id="IPR020103">
    <property type="entry name" value="PsdUridine_synth_cat_dom_sf"/>
</dbReference>
<dbReference type="InterPro" id="IPR006145">
    <property type="entry name" value="PsdUridine_synth_RsuA/RluA"/>
</dbReference>
<dbReference type="InterPro" id="IPR000748">
    <property type="entry name" value="PsdUridine_synth_RsuA/RluB/E/F"/>
</dbReference>
<dbReference type="InterPro" id="IPR018496">
    <property type="entry name" value="PsdUridine_synth_RsuA/RluB_CS"/>
</dbReference>
<dbReference type="InterPro" id="IPR050343">
    <property type="entry name" value="RsuA_PseudoU_synthase"/>
</dbReference>
<dbReference type="InterPro" id="IPR002942">
    <property type="entry name" value="S4_RNA-bd"/>
</dbReference>
<dbReference type="InterPro" id="IPR036986">
    <property type="entry name" value="S4_RNA-bd_sf"/>
</dbReference>
<dbReference type="InterPro" id="IPR020094">
    <property type="entry name" value="TruA/RsuA/RluB/E/F_N"/>
</dbReference>
<dbReference type="NCBIfam" id="TIGR00093">
    <property type="entry name" value="pseudouridine synthase"/>
    <property type="match status" value="1"/>
</dbReference>
<dbReference type="PANTHER" id="PTHR47683">
    <property type="entry name" value="PSEUDOURIDINE SYNTHASE FAMILY PROTEIN-RELATED"/>
    <property type="match status" value="1"/>
</dbReference>
<dbReference type="PANTHER" id="PTHR47683:SF2">
    <property type="entry name" value="RNA-BINDING S4 DOMAIN-CONTAINING PROTEIN"/>
    <property type="match status" value="1"/>
</dbReference>
<dbReference type="Pfam" id="PF00849">
    <property type="entry name" value="PseudoU_synth_2"/>
    <property type="match status" value="1"/>
</dbReference>
<dbReference type="Pfam" id="PF01479">
    <property type="entry name" value="S4"/>
    <property type="match status" value="1"/>
</dbReference>
<dbReference type="SMART" id="SM00363">
    <property type="entry name" value="S4"/>
    <property type="match status" value="1"/>
</dbReference>
<dbReference type="SUPFAM" id="SSF55174">
    <property type="entry name" value="Alpha-L RNA-binding motif"/>
    <property type="match status" value="1"/>
</dbReference>
<dbReference type="SUPFAM" id="SSF55120">
    <property type="entry name" value="Pseudouridine synthase"/>
    <property type="match status" value="1"/>
</dbReference>
<dbReference type="PROSITE" id="PS01149">
    <property type="entry name" value="PSI_RSU"/>
    <property type="match status" value="1"/>
</dbReference>
<dbReference type="PROSITE" id="PS50889">
    <property type="entry name" value="S4"/>
    <property type="match status" value="1"/>
</dbReference>
<keyword id="KW-0413">Isomerase</keyword>
<keyword id="KW-1185">Reference proteome</keyword>
<keyword id="KW-0694">RNA-binding</keyword>
<keyword id="KW-0698">rRNA processing</keyword>
<protein>
    <recommendedName>
        <fullName>Ribosomal large subunit pseudouridine synthase B</fullName>
        <ecNumber>5.4.99.22</ecNumber>
    </recommendedName>
    <alternativeName>
        <fullName>23S rRNA pseudouridine(2605) synthase</fullName>
    </alternativeName>
    <alternativeName>
        <fullName>rRNA pseudouridylate synthase B</fullName>
    </alternativeName>
    <alternativeName>
        <fullName>rRNA-uridine isomerase B</fullName>
    </alternativeName>
</protein>
<evidence type="ECO:0000250" key="1"/>
<evidence type="ECO:0000255" key="2">
    <source>
        <dbReference type="PROSITE-ProRule" id="PRU00182"/>
    </source>
</evidence>
<evidence type="ECO:0000305" key="3"/>
<proteinExistence type="evidence at protein level"/>
<feature type="chain" id="PRO_0000099979" description="Ribosomal large subunit pseudouridine synthase B">
    <location>
        <begin position="1"/>
        <end position="244"/>
    </location>
</feature>
<feature type="domain" description="S4 RNA-binding" evidence="2">
    <location>
        <begin position="2"/>
        <end position="68"/>
    </location>
</feature>
<feature type="active site" description="Nucleophile" evidence="1">
    <location>
        <position position="102"/>
    </location>
</feature>
<feature type="sequence conflict" description="In Ref. 1; AAA67493." evidence="3" ref="1">
    <original>R</original>
    <variation>S</variation>
    <location>
        <position position="17"/>
    </location>
</feature>
<feature type="sequence conflict" description="In Ref. 1; AAA67493." evidence="3" ref="1">
    <original>TPHEVKRLRALADHGKNAF</original>
    <variation>RLTK</variation>
    <location>
        <begin position="226"/>
        <end position="244"/>
    </location>
</feature>
<organism>
    <name type="scientific">Bacillus subtilis (strain 168)</name>
    <dbReference type="NCBI Taxonomy" id="224308"/>
    <lineage>
        <taxon>Bacteria</taxon>
        <taxon>Bacillati</taxon>
        <taxon>Bacillota</taxon>
        <taxon>Bacilli</taxon>
        <taxon>Bacillales</taxon>
        <taxon>Bacillaceae</taxon>
        <taxon>Bacillus</taxon>
    </lineage>
</organism>
<name>RLUB_BACSU</name>
<comment type="function">
    <text>Responsible for synthesis of pseudouridine from uracil-2633 in 23S ribosomal RNA.</text>
</comment>
<comment type="catalytic activity">
    <reaction>
        <text>uridine(2605) in 23S rRNA = pseudouridine(2605) in 23S rRNA</text>
        <dbReference type="Rhea" id="RHEA:42520"/>
        <dbReference type="Rhea" id="RHEA-COMP:10095"/>
        <dbReference type="Rhea" id="RHEA-COMP:10096"/>
        <dbReference type="ChEBI" id="CHEBI:65314"/>
        <dbReference type="ChEBI" id="CHEBI:65315"/>
        <dbReference type="EC" id="5.4.99.22"/>
    </reaction>
</comment>
<comment type="similarity">
    <text evidence="3">Belongs to the pseudouridine synthase RsuA family.</text>
</comment>